<protein>
    <recommendedName>
        <fullName evidence="1">Pyridoxal 5'-phosphate synthase subunit PdxT</fullName>
        <ecNumber evidence="1">4.3.3.6</ecNumber>
    </recommendedName>
    <alternativeName>
        <fullName evidence="1">Pdx2</fullName>
    </alternativeName>
    <alternativeName>
        <fullName evidence="1">Pyridoxal 5'-phosphate synthase glutaminase subunit</fullName>
        <ecNumber evidence="1">3.5.1.2</ecNumber>
    </alternativeName>
</protein>
<proteinExistence type="evidence at protein level"/>
<feature type="chain" id="PRO_0000135649" description="Pyridoxal 5'-phosphate synthase subunit PdxT">
    <location>
        <begin position="1"/>
        <end position="198"/>
    </location>
</feature>
<feature type="active site" description="Nucleophile" evidence="1">
    <location>
        <position position="81"/>
    </location>
</feature>
<feature type="active site" description="Charge relay system" evidence="1">
    <location>
        <position position="177"/>
    </location>
</feature>
<feature type="active site" description="Charge relay system" evidence="1">
    <location>
        <position position="179"/>
    </location>
</feature>
<feature type="binding site" evidence="1">
    <location>
        <begin position="49"/>
        <end position="51"/>
    </location>
    <ligand>
        <name>L-glutamine</name>
        <dbReference type="ChEBI" id="CHEBI:58359"/>
    </ligand>
</feature>
<feature type="binding site" evidence="1">
    <location>
        <position position="113"/>
    </location>
    <ligand>
        <name>L-glutamine</name>
        <dbReference type="ChEBI" id="CHEBI:58359"/>
    </ligand>
</feature>
<feature type="binding site" evidence="1">
    <location>
        <begin position="141"/>
        <end position="142"/>
    </location>
    <ligand>
        <name>L-glutamine</name>
        <dbReference type="ChEBI" id="CHEBI:58359"/>
    </ligand>
</feature>
<name>PDXT_MYCTU</name>
<organism>
    <name type="scientific">Mycobacterium tuberculosis (strain ATCC 25618 / H37Rv)</name>
    <dbReference type="NCBI Taxonomy" id="83332"/>
    <lineage>
        <taxon>Bacteria</taxon>
        <taxon>Bacillati</taxon>
        <taxon>Actinomycetota</taxon>
        <taxon>Actinomycetes</taxon>
        <taxon>Mycobacteriales</taxon>
        <taxon>Mycobacteriaceae</taxon>
        <taxon>Mycobacterium</taxon>
        <taxon>Mycobacterium tuberculosis complex</taxon>
    </lineage>
</organism>
<evidence type="ECO:0000255" key="1">
    <source>
        <dbReference type="HAMAP-Rule" id="MF_01615"/>
    </source>
</evidence>
<accession>P9WII7</accession>
<accession>L0TAD2</accession>
<accession>O06210</accession>
<accession>Q7D6X1</accession>
<comment type="function">
    <text evidence="1">Catalyzes the hydrolysis of glutamine to glutamate and ammonia as part of the biosynthesis of pyridoxal 5'-phosphate. The resulting ammonia molecule is channeled to the active site of PdxS.</text>
</comment>
<comment type="catalytic activity">
    <reaction evidence="1">
        <text>aldehydo-D-ribose 5-phosphate + D-glyceraldehyde 3-phosphate + L-glutamine = pyridoxal 5'-phosphate + L-glutamate + phosphate + 3 H2O + H(+)</text>
        <dbReference type="Rhea" id="RHEA:31507"/>
        <dbReference type="ChEBI" id="CHEBI:15377"/>
        <dbReference type="ChEBI" id="CHEBI:15378"/>
        <dbReference type="ChEBI" id="CHEBI:29985"/>
        <dbReference type="ChEBI" id="CHEBI:43474"/>
        <dbReference type="ChEBI" id="CHEBI:58273"/>
        <dbReference type="ChEBI" id="CHEBI:58359"/>
        <dbReference type="ChEBI" id="CHEBI:59776"/>
        <dbReference type="ChEBI" id="CHEBI:597326"/>
        <dbReference type="EC" id="4.3.3.6"/>
    </reaction>
</comment>
<comment type="catalytic activity">
    <reaction evidence="1">
        <text>L-glutamine + H2O = L-glutamate + NH4(+)</text>
        <dbReference type="Rhea" id="RHEA:15889"/>
        <dbReference type="ChEBI" id="CHEBI:15377"/>
        <dbReference type="ChEBI" id="CHEBI:28938"/>
        <dbReference type="ChEBI" id="CHEBI:29985"/>
        <dbReference type="ChEBI" id="CHEBI:58359"/>
        <dbReference type="EC" id="3.5.1.2"/>
    </reaction>
</comment>
<comment type="pathway">
    <text evidence="1">Cofactor biosynthesis; pyridoxal 5'-phosphate biosynthesis.</text>
</comment>
<comment type="subunit">
    <text evidence="1">In the presence of PdxS, forms a dodecamer of heterodimers. Only shows activity in the heterodimer.</text>
</comment>
<comment type="similarity">
    <text evidence="1">Belongs to the glutaminase PdxT/SNO family.</text>
</comment>
<keyword id="KW-0315">Glutamine amidotransferase</keyword>
<keyword id="KW-0378">Hydrolase</keyword>
<keyword id="KW-0456">Lyase</keyword>
<keyword id="KW-0663">Pyridoxal phosphate</keyword>
<keyword id="KW-1185">Reference proteome</keyword>
<reference key="1">
    <citation type="journal article" date="1998" name="Nature">
        <title>Deciphering the biology of Mycobacterium tuberculosis from the complete genome sequence.</title>
        <authorList>
            <person name="Cole S.T."/>
            <person name="Brosch R."/>
            <person name="Parkhill J."/>
            <person name="Garnier T."/>
            <person name="Churcher C.M."/>
            <person name="Harris D.E."/>
            <person name="Gordon S.V."/>
            <person name="Eiglmeier K."/>
            <person name="Gas S."/>
            <person name="Barry C.E. III"/>
            <person name="Tekaia F."/>
            <person name="Badcock K."/>
            <person name="Basham D."/>
            <person name="Brown D."/>
            <person name="Chillingworth T."/>
            <person name="Connor R."/>
            <person name="Davies R.M."/>
            <person name="Devlin K."/>
            <person name="Feltwell T."/>
            <person name="Gentles S."/>
            <person name="Hamlin N."/>
            <person name="Holroyd S."/>
            <person name="Hornsby T."/>
            <person name="Jagels K."/>
            <person name="Krogh A."/>
            <person name="McLean J."/>
            <person name="Moule S."/>
            <person name="Murphy L.D."/>
            <person name="Oliver S."/>
            <person name="Osborne J."/>
            <person name="Quail M.A."/>
            <person name="Rajandream M.A."/>
            <person name="Rogers J."/>
            <person name="Rutter S."/>
            <person name="Seeger K."/>
            <person name="Skelton S."/>
            <person name="Squares S."/>
            <person name="Squares R."/>
            <person name="Sulston J.E."/>
            <person name="Taylor K."/>
            <person name="Whitehead S."/>
            <person name="Barrell B.G."/>
        </authorList>
    </citation>
    <scope>NUCLEOTIDE SEQUENCE [LARGE SCALE GENOMIC DNA]</scope>
    <source>
        <strain>ATCC 25618 / H37Rv</strain>
    </source>
</reference>
<reference key="2">
    <citation type="journal article" date="2011" name="Mol. Cell. Proteomics">
        <title>Proteogenomic analysis of Mycobacterium tuberculosis by high resolution mass spectrometry.</title>
        <authorList>
            <person name="Kelkar D.S."/>
            <person name="Kumar D."/>
            <person name="Kumar P."/>
            <person name="Balakrishnan L."/>
            <person name="Muthusamy B."/>
            <person name="Yadav A.K."/>
            <person name="Shrivastava P."/>
            <person name="Marimuthu A."/>
            <person name="Anand S."/>
            <person name="Sundaram H."/>
            <person name="Kingsbury R."/>
            <person name="Harsha H.C."/>
            <person name="Nair B."/>
            <person name="Prasad T.S."/>
            <person name="Chauhan D.S."/>
            <person name="Katoch K."/>
            <person name="Katoch V.M."/>
            <person name="Kumar P."/>
            <person name="Chaerkady R."/>
            <person name="Ramachandran S."/>
            <person name="Dash D."/>
            <person name="Pandey A."/>
        </authorList>
    </citation>
    <scope>IDENTIFICATION BY MASS SPECTROMETRY [LARGE SCALE ANALYSIS]</scope>
    <source>
        <strain>ATCC 25618 / H37Rv</strain>
    </source>
</reference>
<sequence>MSVPRVGVLALQGDTREHLAALRECGAEPMTVRRRDELDAVDALVIPGGESTTMSHLLLDLDLLGPLRARLADGLPAYGSCAGMILLASEILDAGAAGRQALPLRAMNMTVRRNAFGSQVDSFEGDIEFAGLDDPVRAVFIRAPWVERVGDGVQVLARAAGHIVAVRQGAVLATAFHPEMTGDRRIHQLFVDIVTSAA</sequence>
<dbReference type="EC" id="4.3.3.6" evidence="1"/>
<dbReference type="EC" id="3.5.1.2" evidence="1"/>
<dbReference type="EMBL" id="AL123456">
    <property type="protein sequence ID" value="CCP45401.1"/>
    <property type="molecule type" value="Genomic_DNA"/>
</dbReference>
<dbReference type="PIR" id="C70570">
    <property type="entry name" value="C70570"/>
</dbReference>
<dbReference type="RefSeq" id="WP_003413465.1">
    <property type="nucleotide sequence ID" value="NZ_NVQJ01000023.1"/>
</dbReference>
<dbReference type="SMR" id="P9WII7"/>
<dbReference type="FunCoup" id="P9WII7">
    <property type="interactions" value="185"/>
</dbReference>
<dbReference type="STRING" id="83332.Rv2604c"/>
<dbReference type="PaxDb" id="83332-Rv2604c"/>
<dbReference type="DNASU" id="887371"/>
<dbReference type="KEGG" id="mtu:Rv2604c"/>
<dbReference type="KEGG" id="mtv:RVBD_2604c"/>
<dbReference type="TubercuList" id="Rv2604c"/>
<dbReference type="eggNOG" id="COG0311">
    <property type="taxonomic scope" value="Bacteria"/>
</dbReference>
<dbReference type="InParanoid" id="P9WII7"/>
<dbReference type="OrthoDB" id="9810320at2"/>
<dbReference type="PhylomeDB" id="P9WII7"/>
<dbReference type="UniPathway" id="UPA00245"/>
<dbReference type="Proteomes" id="UP000001584">
    <property type="component" value="Chromosome"/>
</dbReference>
<dbReference type="GO" id="GO:0005829">
    <property type="term" value="C:cytosol"/>
    <property type="evidence" value="ECO:0000318"/>
    <property type="project" value="GO_Central"/>
</dbReference>
<dbReference type="GO" id="GO:1903600">
    <property type="term" value="C:glutaminase complex"/>
    <property type="evidence" value="ECO:0000318"/>
    <property type="project" value="GO_Central"/>
</dbReference>
<dbReference type="GO" id="GO:0016843">
    <property type="term" value="F:amine-lyase activity"/>
    <property type="evidence" value="ECO:0000314"/>
    <property type="project" value="MTBBASE"/>
</dbReference>
<dbReference type="GO" id="GO:0004359">
    <property type="term" value="F:glutaminase activity"/>
    <property type="evidence" value="ECO:0007669"/>
    <property type="project" value="UniProtKB-UniRule"/>
</dbReference>
<dbReference type="GO" id="GO:0036381">
    <property type="term" value="F:pyridoxal 5'-phosphate synthase (glutamine hydrolysing) activity"/>
    <property type="evidence" value="ECO:0007669"/>
    <property type="project" value="UniProtKB-UniRule"/>
</dbReference>
<dbReference type="GO" id="GO:0006543">
    <property type="term" value="P:glutamine catabolic process"/>
    <property type="evidence" value="ECO:0007669"/>
    <property type="project" value="UniProtKB-UniRule"/>
</dbReference>
<dbReference type="GO" id="GO:0042823">
    <property type="term" value="P:pyridoxal phosphate biosynthetic process"/>
    <property type="evidence" value="ECO:0000314"/>
    <property type="project" value="MTBBASE"/>
</dbReference>
<dbReference type="GO" id="GO:0008614">
    <property type="term" value="P:pyridoxine metabolic process"/>
    <property type="evidence" value="ECO:0000318"/>
    <property type="project" value="GO_Central"/>
</dbReference>
<dbReference type="CDD" id="cd01749">
    <property type="entry name" value="GATase1_PB"/>
    <property type="match status" value="1"/>
</dbReference>
<dbReference type="FunFam" id="3.40.50.880:FF:000010">
    <property type="entry name" value="uncharacterized protein LOC100176842 isoform X2"/>
    <property type="match status" value="1"/>
</dbReference>
<dbReference type="Gene3D" id="3.40.50.880">
    <property type="match status" value="1"/>
</dbReference>
<dbReference type="HAMAP" id="MF_01615">
    <property type="entry name" value="PdxT"/>
    <property type="match status" value="1"/>
</dbReference>
<dbReference type="InterPro" id="IPR029062">
    <property type="entry name" value="Class_I_gatase-like"/>
</dbReference>
<dbReference type="InterPro" id="IPR002161">
    <property type="entry name" value="PdxT/SNO"/>
</dbReference>
<dbReference type="InterPro" id="IPR021196">
    <property type="entry name" value="PdxT/SNO_CS"/>
</dbReference>
<dbReference type="NCBIfam" id="TIGR03800">
    <property type="entry name" value="PLP_synth_Pdx2"/>
    <property type="match status" value="1"/>
</dbReference>
<dbReference type="PANTHER" id="PTHR31559">
    <property type="entry name" value="PYRIDOXAL 5'-PHOSPHATE SYNTHASE SUBUNIT SNO"/>
    <property type="match status" value="1"/>
</dbReference>
<dbReference type="PANTHER" id="PTHR31559:SF0">
    <property type="entry name" value="PYRIDOXAL 5'-PHOSPHATE SYNTHASE SUBUNIT SNO1-RELATED"/>
    <property type="match status" value="1"/>
</dbReference>
<dbReference type="Pfam" id="PF01174">
    <property type="entry name" value="SNO"/>
    <property type="match status" value="1"/>
</dbReference>
<dbReference type="PIRSF" id="PIRSF005639">
    <property type="entry name" value="Glut_amidoT_SNO"/>
    <property type="match status" value="1"/>
</dbReference>
<dbReference type="SUPFAM" id="SSF52317">
    <property type="entry name" value="Class I glutamine amidotransferase-like"/>
    <property type="match status" value="1"/>
</dbReference>
<dbReference type="PROSITE" id="PS01236">
    <property type="entry name" value="PDXT_SNO_1"/>
    <property type="match status" value="1"/>
</dbReference>
<dbReference type="PROSITE" id="PS51130">
    <property type="entry name" value="PDXT_SNO_2"/>
    <property type="match status" value="1"/>
</dbReference>
<gene>
    <name evidence="1" type="primary">pdxT</name>
    <name type="ordered locus">Rv2604c</name>
</gene>